<accession>A8QB65</accession>
<sequence length="433" mass="48269">MWKLLANVVSNVVSQGWEVFVEVFVVSYRHIPSHTLSVPTDITVDKLNMLANKTLNNISDKEFESVAFDFLISSTILRTTLEEFVQENHVPVESVISIECIVQEPAPEPDSDIALLDWIGAIRCNDKFIASATYGGELVLWNHYGKKLTSSVLHEEAIKCLALLPDQKEDRIVTGGHDQVLMLSDVETHGSSTFIKPTCVLRGHERSVEAIAVNTDGTRTVSGGFDKMLKVWNTDKDDTSTVFEKTRSEKTGKKKRTDIITKIPMVTLSGHKDAIVSAVWSPNSAKEVLTVSWDHTISIWDLELAGQINTLAAKKAFTSISVCCSSGMLITGSVDPVVRLWDPRSHEGTLVKQSFIGHCGWISSVFWNKVKENLFISASFDKTVKMWDVRSNKTPLYDLVGHSDRILCCDWSVNELIVSGGVDCTMKTYRRKM</sequence>
<evidence type="ECO:0000255" key="1">
    <source>
        <dbReference type="HAMAP-Rule" id="MF_03029"/>
    </source>
</evidence>
<dbReference type="EMBL" id="DS239429">
    <property type="protein sequence ID" value="EDP29735.1"/>
    <property type="molecule type" value="Genomic_DNA"/>
</dbReference>
<dbReference type="RefSeq" id="XP_001901055.1">
    <property type="nucleotide sequence ID" value="XM_001901020.1"/>
</dbReference>
<dbReference type="SMR" id="A8QB65"/>
<dbReference type="FunCoup" id="A8QB65">
    <property type="interactions" value="1875"/>
</dbReference>
<dbReference type="STRING" id="6279.A8QB65"/>
<dbReference type="WormBase" id="Bm13694a">
    <property type="protein sequence ID" value="BM42243"/>
    <property type="gene ID" value="WBGene00233955"/>
    <property type="gene designation" value="Bma-wdr-12"/>
</dbReference>
<dbReference type="InParanoid" id="A8QB65"/>
<dbReference type="Proteomes" id="UP000006672">
    <property type="component" value="Unassembled WGS sequence"/>
</dbReference>
<dbReference type="GO" id="GO:0005654">
    <property type="term" value="C:nucleoplasm"/>
    <property type="evidence" value="ECO:0007669"/>
    <property type="project" value="UniProtKB-SubCell"/>
</dbReference>
<dbReference type="GO" id="GO:0070545">
    <property type="term" value="C:PeBoW complex"/>
    <property type="evidence" value="ECO:0000250"/>
    <property type="project" value="UniProtKB"/>
</dbReference>
<dbReference type="GO" id="GO:0030687">
    <property type="term" value="C:preribosome, large subunit precursor"/>
    <property type="evidence" value="ECO:0007669"/>
    <property type="project" value="UniProtKB-UniRule"/>
</dbReference>
<dbReference type="GO" id="GO:0043021">
    <property type="term" value="F:ribonucleoprotein complex binding"/>
    <property type="evidence" value="ECO:0007669"/>
    <property type="project" value="UniProtKB-UniRule"/>
</dbReference>
<dbReference type="GO" id="GO:0000466">
    <property type="term" value="P:maturation of 5.8S rRNA from tricistronic rRNA transcript (SSU-rRNA, 5.8S rRNA, LSU-rRNA)"/>
    <property type="evidence" value="ECO:0007669"/>
    <property type="project" value="UniProtKB-UniRule"/>
</dbReference>
<dbReference type="GO" id="GO:0000463">
    <property type="term" value="P:maturation of LSU-rRNA from tricistronic rRNA transcript (SSU-rRNA, 5.8S rRNA, LSU-rRNA)"/>
    <property type="evidence" value="ECO:0000250"/>
    <property type="project" value="UniProtKB"/>
</dbReference>
<dbReference type="FunFam" id="2.130.10.10:FF:002735">
    <property type="entry name" value="Ribosome biogenesis protein WDR12 homolog"/>
    <property type="match status" value="1"/>
</dbReference>
<dbReference type="Gene3D" id="2.130.10.10">
    <property type="entry name" value="YVTN repeat-like/Quinoprotein amine dehydrogenase"/>
    <property type="match status" value="1"/>
</dbReference>
<dbReference type="HAMAP" id="MF_03029">
    <property type="entry name" value="WDR12"/>
    <property type="match status" value="1"/>
</dbReference>
<dbReference type="InterPro" id="IPR020472">
    <property type="entry name" value="G-protein_beta_WD-40_rep"/>
</dbReference>
<dbReference type="InterPro" id="IPR012972">
    <property type="entry name" value="NLE"/>
</dbReference>
<dbReference type="InterPro" id="IPR015943">
    <property type="entry name" value="WD40/YVTN_repeat-like_dom_sf"/>
</dbReference>
<dbReference type="InterPro" id="IPR019775">
    <property type="entry name" value="WD40_repeat_CS"/>
</dbReference>
<dbReference type="InterPro" id="IPR036322">
    <property type="entry name" value="WD40_repeat_dom_sf"/>
</dbReference>
<dbReference type="InterPro" id="IPR001680">
    <property type="entry name" value="WD40_rpt"/>
</dbReference>
<dbReference type="InterPro" id="IPR028599">
    <property type="entry name" value="WDR12/Ytm1"/>
</dbReference>
<dbReference type="PANTHER" id="PTHR19855:SF11">
    <property type="entry name" value="RIBOSOME BIOGENESIS PROTEIN WDR12"/>
    <property type="match status" value="1"/>
</dbReference>
<dbReference type="PANTHER" id="PTHR19855">
    <property type="entry name" value="WD40 REPEAT PROTEIN 12, 37"/>
    <property type="match status" value="1"/>
</dbReference>
<dbReference type="Pfam" id="PF08154">
    <property type="entry name" value="NLE"/>
    <property type="match status" value="1"/>
</dbReference>
<dbReference type="Pfam" id="PF00400">
    <property type="entry name" value="WD40"/>
    <property type="match status" value="5"/>
</dbReference>
<dbReference type="PRINTS" id="PR00320">
    <property type="entry name" value="GPROTEINBRPT"/>
</dbReference>
<dbReference type="SMART" id="SM00320">
    <property type="entry name" value="WD40"/>
    <property type="match status" value="7"/>
</dbReference>
<dbReference type="SUPFAM" id="SSF50978">
    <property type="entry name" value="WD40 repeat-like"/>
    <property type="match status" value="1"/>
</dbReference>
<dbReference type="PROSITE" id="PS00678">
    <property type="entry name" value="WD_REPEATS_1"/>
    <property type="match status" value="2"/>
</dbReference>
<dbReference type="PROSITE" id="PS50082">
    <property type="entry name" value="WD_REPEATS_2"/>
    <property type="match status" value="3"/>
</dbReference>
<dbReference type="PROSITE" id="PS50294">
    <property type="entry name" value="WD_REPEATS_REGION"/>
    <property type="match status" value="1"/>
</dbReference>
<protein>
    <recommendedName>
        <fullName evidence="1">Ribosome biogenesis protein WDR12 homolog</fullName>
    </recommendedName>
</protein>
<name>WDR12_BRUMA</name>
<organism>
    <name type="scientific">Brugia malayi</name>
    <name type="common">Filarial nematode worm</name>
    <dbReference type="NCBI Taxonomy" id="6279"/>
    <lineage>
        <taxon>Eukaryota</taxon>
        <taxon>Metazoa</taxon>
        <taxon>Ecdysozoa</taxon>
        <taxon>Nematoda</taxon>
        <taxon>Chromadorea</taxon>
        <taxon>Rhabditida</taxon>
        <taxon>Spirurina</taxon>
        <taxon>Spiruromorpha</taxon>
        <taxon>Filarioidea</taxon>
        <taxon>Onchocercidae</taxon>
        <taxon>Brugia</taxon>
    </lineage>
</organism>
<feature type="chain" id="PRO_0000369550" description="Ribosome biogenesis protein WDR12 homolog">
    <location>
        <begin position="1"/>
        <end position="433"/>
    </location>
</feature>
<feature type="repeat" description="WD 1">
    <location>
        <begin position="114"/>
        <end position="151"/>
    </location>
</feature>
<feature type="repeat" description="WD 2">
    <location>
        <begin position="153"/>
        <end position="194"/>
    </location>
</feature>
<feature type="repeat" description="WD 3">
    <location>
        <begin position="203"/>
        <end position="242"/>
    </location>
</feature>
<feature type="repeat" description="WD 4">
    <location>
        <begin position="270"/>
        <end position="310"/>
    </location>
</feature>
<feature type="repeat" description="WD 5">
    <location>
        <begin position="312"/>
        <end position="351"/>
    </location>
</feature>
<feature type="repeat" description="WD 6">
    <location>
        <begin position="357"/>
        <end position="397"/>
    </location>
</feature>
<feature type="repeat" description="WD 7">
    <location>
        <begin position="401"/>
        <end position="433"/>
    </location>
</feature>
<feature type="region of interest" description="Ubiquitin-like (UBL) domain" evidence="1">
    <location>
        <begin position="21"/>
        <end position="102"/>
    </location>
</feature>
<gene>
    <name type="ORF">Bm1_47965</name>
</gene>
<keyword id="KW-0539">Nucleus</keyword>
<keyword id="KW-1185">Reference proteome</keyword>
<keyword id="KW-0677">Repeat</keyword>
<keyword id="KW-0690">Ribosome biogenesis</keyword>
<keyword id="KW-0698">rRNA processing</keyword>
<keyword id="KW-0853">WD repeat</keyword>
<proteinExistence type="inferred from homology"/>
<comment type="function">
    <text evidence="1">Required for maturation of ribosomal RNAs and formation of the large ribosomal subunit.</text>
</comment>
<comment type="subcellular location">
    <subcellularLocation>
        <location evidence="1">Nucleus</location>
        <location evidence="1">Nucleolus</location>
    </subcellularLocation>
    <subcellularLocation>
        <location evidence="1">Nucleus</location>
        <location evidence="1">Nucleoplasm</location>
    </subcellularLocation>
</comment>
<comment type="similarity">
    <text evidence="1">Belongs to the WD repeat WDR12/YTM1 family.</text>
</comment>
<reference key="1">
    <citation type="journal article" date="2007" name="Science">
        <title>Draft genome of the filarial nematode parasite Brugia malayi.</title>
        <authorList>
            <person name="Ghedin E."/>
            <person name="Wang S."/>
            <person name="Spiro D."/>
            <person name="Caler E."/>
            <person name="Zhao Q."/>
            <person name="Crabtree J."/>
            <person name="Allen J.E."/>
            <person name="Delcher A.L."/>
            <person name="Guiliano D.B."/>
            <person name="Miranda-Saavedra D."/>
            <person name="Angiuoli S.V."/>
            <person name="Creasy T."/>
            <person name="Amedeo P."/>
            <person name="Haas B."/>
            <person name="El-Sayed N.M."/>
            <person name="Wortman J.R."/>
            <person name="Feldblyum T."/>
            <person name="Tallon L."/>
            <person name="Schatz M."/>
            <person name="Shumway M."/>
            <person name="Koo H."/>
            <person name="Salzberg S.L."/>
            <person name="Schobel S."/>
            <person name="Pertea M."/>
            <person name="Pop M."/>
            <person name="White O."/>
            <person name="Barton G.J."/>
            <person name="Carlow C.K.S."/>
            <person name="Crawford M.J."/>
            <person name="Daub J."/>
            <person name="Dimmic M.W."/>
            <person name="Estes C.F."/>
            <person name="Foster J.M."/>
            <person name="Ganatra M."/>
            <person name="Gregory W.F."/>
            <person name="Johnson N.M."/>
            <person name="Jin J."/>
            <person name="Komuniecki R."/>
            <person name="Korf I."/>
            <person name="Kumar S."/>
            <person name="Laney S."/>
            <person name="Li B.-W."/>
            <person name="Li W."/>
            <person name="Lindblom T.H."/>
            <person name="Lustigman S."/>
            <person name="Ma D."/>
            <person name="Maina C.V."/>
            <person name="Martin D.M."/>
            <person name="McCarter J.P."/>
            <person name="McReynolds L."/>
            <person name="Mitreva M."/>
            <person name="Nutman T.B."/>
            <person name="Parkinson J."/>
            <person name="Peregrin-Alvarez J.M."/>
            <person name="Poole C."/>
            <person name="Ren Q."/>
            <person name="Saunders L."/>
            <person name="Sluder A.E."/>
            <person name="Smith K."/>
            <person name="Stanke M."/>
            <person name="Unnasch T.R."/>
            <person name="Ware J."/>
            <person name="Wei A.D."/>
            <person name="Weil G."/>
            <person name="Williams D.J."/>
            <person name="Zhang Y."/>
            <person name="Williams S.A."/>
            <person name="Fraser-Liggett C."/>
            <person name="Slatko B."/>
            <person name="Blaxter M.L."/>
            <person name="Scott A.L."/>
        </authorList>
    </citation>
    <scope>NUCLEOTIDE SEQUENCE [LARGE SCALE GENOMIC DNA]</scope>
</reference>